<name>GLMM_ACIB5</name>
<organism>
    <name type="scientific">Acinetobacter baumannii (strain AB0057)</name>
    <dbReference type="NCBI Taxonomy" id="480119"/>
    <lineage>
        <taxon>Bacteria</taxon>
        <taxon>Pseudomonadati</taxon>
        <taxon>Pseudomonadota</taxon>
        <taxon>Gammaproteobacteria</taxon>
        <taxon>Moraxellales</taxon>
        <taxon>Moraxellaceae</taxon>
        <taxon>Acinetobacter</taxon>
        <taxon>Acinetobacter calcoaceticus/baumannii complex</taxon>
    </lineage>
</organism>
<proteinExistence type="inferred from homology"/>
<protein>
    <recommendedName>
        <fullName evidence="1">Phosphoglucosamine mutase</fullName>
        <ecNumber evidence="1">5.4.2.10</ecNumber>
    </recommendedName>
</protein>
<sequence>MSYFGTDGIRGKFGQMPITPEFALKLGFAAGKVLKRTSPKNKPLVVLGKDTRLSGYILESALQAGLNAAGVYVHLLGPLPTPAIAHLTRALHAHAGIVISASHNPYFDNGIKFFSSEGKKLPDSLQEEINKELEKDLFIEDTANLGKSVRVTDANGRYIEFCKSTFPYHFDLNNLKIVVDCAHGAAYSVGPSVFRELGAKVVALYNEPDGLNINENCGSTHPESLQKAVVEHGADLGIAFDGDADRVVMVDKFGNLIDGDHILYILATQAKNKPAGVVGTVMSNMALEVALEKANVGFVRAKVGDRYVLQALEENGWVTGGEPSGHILTLDKSTTGDAIIAALQVLTVMVEQNKALHELVNGFKLYPQVLVNVRLEQMLDPYSIPALVAEFNKAEEQLKGRGRILIRKSGTEPVIRVMVEGDNEQEVKTLAEHLANAVRSQAQVA</sequence>
<gene>
    <name evidence="1" type="primary">glmM</name>
    <name type="ordered locus">AB57_3769</name>
</gene>
<comment type="function">
    <text evidence="1">Catalyzes the conversion of glucosamine-6-phosphate to glucosamine-1-phosphate.</text>
</comment>
<comment type="catalytic activity">
    <reaction evidence="1">
        <text>alpha-D-glucosamine 1-phosphate = D-glucosamine 6-phosphate</text>
        <dbReference type="Rhea" id="RHEA:23424"/>
        <dbReference type="ChEBI" id="CHEBI:58516"/>
        <dbReference type="ChEBI" id="CHEBI:58725"/>
        <dbReference type="EC" id="5.4.2.10"/>
    </reaction>
</comment>
<comment type="cofactor">
    <cofactor evidence="1">
        <name>Mg(2+)</name>
        <dbReference type="ChEBI" id="CHEBI:18420"/>
    </cofactor>
    <text evidence="1">Binds 1 Mg(2+) ion per subunit.</text>
</comment>
<comment type="PTM">
    <text evidence="1">Activated by phosphorylation.</text>
</comment>
<comment type="similarity">
    <text evidence="1">Belongs to the phosphohexose mutase family.</text>
</comment>
<feature type="chain" id="PRO_1000201048" description="Phosphoglucosamine mutase">
    <location>
        <begin position="1"/>
        <end position="445"/>
    </location>
</feature>
<feature type="active site" description="Phosphoserine intermediate" evidence="1">
    <location>
        <position position="102"/>
    </location>
</feature>
<feature type="binding site" description="via phosphate group" evidence="1">
    <location>
        <position position="102"/>
    </location>
    <ligand>
        <name>Mg(2+)</name>
        <dbReference type="ChEBI" id="CHEBI:18420"/>
    </ligand>
</feature>
<feature type="binding site" evidence="1">
    <location>
        <position position="241"/>
    </location>
    <ligand>
        <name>Mg(2+)</name>
        <dbReference type="ChEBI" id="CHEBI:18420"/>
    </ligand>
</feature>
<feature type="binding site" evidence="1">
    <location>
        <position position="243"/>
    </location>
    <ligand>
        <name>Mg(2+)</name>
        <dbReference type="ChEBI" id="CHEBI:18420"/>
    </ligand>
</feature>
<feature type="binding site" evidence="1">
    <location>
        <position position="245"/>
    </location>
    <ligand>
        <name>Mg(2+)</name>
        <dbReference type="ChEBI" id="CHEBI:18420"/>
    </ligand>
</feature>
<feature type="modified residue" description="Phosphoserine" evidence="1">
    <location>
        <position position="102"/>
    </location>
</feature>
<reference key="1">
    <citation type="journal article" date="2008" name="J. Bacteriol.">
        <title>Comparative genome sequence analysis of multidrug-resistant Acinetobacter baumannii.</title>
        <authorList>
            <person name="Adams M.D."/>
            <person name="Goglin K."/>
            <person name="Molyneaux N."/>
            <person name="Hujer K.M."/>
            <person name="Lavender H."/>
            <person name="Jamison J.J."/>
            <person name="MacDonald I.J."/>
            <person name="Martin K.M."/>
            <person name="Russo T."/>
            <person name="Campagnari A.A."/>
            <person name="Hujer A.M."/>
            <person name="Bonomo R.A."/>
            <person name="Gill S.R."/>
        </authorList>
    </citation>
    <scope>NUCLEOTIDE SEQUENCE [LARGE SCALE GENOMIC DNA]</scope>
    <source>
        <strain>AB0057</strain>
    </source>
</reference>
<evidence type="ECO:0000255" key="1">
    <source>
        <dbReference type="HAMAP-Rule" id="MF_01554"/>
    </source>
</evidence>
<keyword id="KW-0413">Isomerase</keyword>
<keyword id="KW-0460">Magnesium</keyword>
<keyword id="KW-0479">Metal-binding</keyword>
<keyword id="KW-0597">Phosphoprotein</keyword>
<dbReference type="EC" id="5.4.2.10" evidence="1"/>
<dbReference type="EMBL" id="CP001182">
    <property type="protein sequence ID" value="ACJ43121.1"/>
    <property type="molecule type" value="Genomic_DNA"/>
</dbReference>
<dbReference type="RefSeq" id="WP_000119870.1">
    <property type="nucleotide sequence ID" value="NC_011586.2"/>
</dbReference>
<dbReference type="SMR" id="B7ICC7"/>
<dbReference type="KEGG" id="abn:AB57_3769"/>
<dbReference type="HOGENOM" id="CLU_016950_7_0_6"/>
<dbReference type="Proteomes" id="UP000007094">
    <property type="component" value="Chromosome"/>
</dbReference>
<dbReference type="GO" id="GO:0005829">
    <property type="term" value="C:cytosol"/>
    <property type="evidence" value="ECO:0007669"/>
    <property type="project" value="TreeGrafter"/>
</dbReference>
<dbReference type="GO" id="GO:0000287">
    <property type="term" value="F:magnesium ion binding"/>
    <property type="evidence" value="ECO:0007669"/>
    <property type="project" value="UniProtKB-UniRule"/>
</dbReference>
<dbReference type="GO" id="GO:0008966">
    <property type="term" value="F:phosphoglucosamine mutase activity"/>
    <property type="evidence" value="ECO:0007669"/>
    <property type="project" value="UniProtKB-UniRule"/>
</dbReference>
<dbReference type="GO" id="GO:0004615">
    <property type="term" value="F:phosphomannomutase activity"/>
    <property type="evidence" value="ECO:0007669"/>
    <property type="project" value="TreeGrafter"/>
</dbReference>
<dbReference type="GO" id="GO:0005975">
    <property type="term" value="P:carbohydrate metabolic process"/>
    <property type="evidence" value="ECO:0007669"/>
    <property type="project" value="InterPro"/>
</dbReference>
<dbReference type="GO" id="GO:0009252">
    <property type="term" value="P:peptidoglycan biosynthetic process"/>
    <property type="evidence" value="ECO:0007669"/>
    <property type="project" value="TreeGrafter"/>
</dbReference>
<dbReference type="GO" id="GO:0006048">
    <property type="term" value="P:UDP-N-acetylglucosamine biosynthetic process"/>
    <property type="evidence" value="ECO:0007669"/>
    <property type="project" value="TreeGrafter"/>
</dbReference>
<dbReference type="CDD" id="cd05802">
    <property type="entry name" value="GlmM"/>
    <property type="match status" value="1"/>
</dbReference>
<dbReference type="FunFam" id="3.30.310.50:FF:000001">
    <property type="entry name" value="Phosphoglucosamine mutase"/>
    <property type="match status" value="1"/>
</dbReference>
<dbReference type="FunFam" id="3.40.120.10:FF:000001">
    <property type="entry name" value="Phosphoglucosamine mutase"/>
    <property type="match status" value="1"/>
</dbReference>
<dbReference type="FunFam" id="3.40.120.10:FF:000003">
    <property type="entry name" value="Phosphoglucosamine mutase"/>
    <property type="match status" value="1"/>
</dbReference>
<dbReference type="Gene3D" id="3.40.120.10">
    <property type="entry name" value="Alpha-D-Glucose-1,6-Bisphosphate, subunit A, domain 3"/>
    <property type="match status" value="3"/>
</dbReference>
<dbReference type="Gene3D" id="3.30.310.50">
    <property type="entry name" value="Alpha-D-phosphohexomutase, C-terminal domain"/>
    <property type="match status" value="1"/>
</dbReference>
<dbReference type="HAMAP" id="MF_01554_B">
    <property type="entry name" value="GlmM_B"/>
    <property type="match status" value="1"/>
</dbReference>
<dbReference type="InterPro" id="IPR005844">
    <property type="entry name" value="A-D-PHexomutase_a/b/a-I"/>
</dbReference>
<dbReference type="InterPro" id="IPR016055">
    <property type="entry name" value="A-D-PHexomutase_a/b/a-I/II/III"/>
</dbReference>
<dbReference type="InterPro" id="IPR005845">
    <property type="entry name" value="A-D-PHexomutase_a/b/a-II"/>
</dbReference>
<dbReference type="InterPro" id="IPR005846">
    <property type="entry name" value="A-D-PHexomutase_a/b/a-III"/>
</dbReference>
<dbReference type="InterPro" id="IPR005843">
    <property type="entry name" value="A-D-PHexomutase_C"/>
</dbReference>
<dbReference type="InterPro" id="IPR036900">
    <property type="entry name" value="A-D-PHexomutase_C_sf"/>
</dbReference>
<dbReference type="InterPro" id="IPR016066">
    <property type="entry name" value="A-D-PHexomutase_CS"/>
</dbReference>
<dbReference type="InterPro" id="IPR005841">
    <property type="entry name" value="Alpha-D-phosphohexomutase_SF"/>
</dbReference>
<dbReference type="InterPro" id="IPR006352">
    <property type="entry name" value="GlmM_bact"/>
</dbReference>
<dbReference type="InterPro" id="IPR050060">
    <property type="entry name" value="Phosphoglucosamine_mutase"/>
</dbReference>
<dbReference type="NCBIfam" id="TIGR01455">
    <property type="entry name" value="glmM"/>
    <property type="match status" value="1"/>
</dbReference>
<dbReference type="NCBIfam" id="NF008139">
    <property type="entry name" value="PRK10887.1"/>
    <property type="match status" value="1"/>
</dbReference>
<dbReference type="PANTHER" id="PTHR42946:SF1">
    <property type="entry name" value="PHOSPHOGLUCOMUTASE (ALPHA-D-GLUCOSE-1,6-BISPHOSPHATE-DEPENDENT)"/>
    <property type="match status" value="1"/>
</dbReference>
<dbReference type="PANTHER" id="PTHR42946">
    <property type="entry name" value="PHOSPHOHEXOSE MUTASE"/>
    <property type="match status" value="1"/>
</dbReference>
<dbReference type="Pfam" id="PF02878">
    <property type="entry name" value="PGM_PMM_I"/>
    <property type="match status" value="1"/>
</dbReference>
<dbReference type="Pfam" id="PF02879">
    <property type="entry name" value="PGM_PMM_II"/>
    <property type="match status" value="1"/>
</dbReference>
<dbReference type="Pfam" id="PF02880">
    <property type="entry name" value="PGM_PMM_III"/>
    <property type="match status" value="1"/>
</dbReference>
<dbReference type="Pfam" id="PF00408">
    <property type="entry name" value="PGM_PMM_IV"/>
    <property type="match status" value="1"/>
</dbReference>
<dbReference type="PRINTS" id="PR00509">
    <property type="entry name" value="PGMPMM"/>
</dbReference>
<dbReference type="SUPFAM" id="SSF55957">
    <property type="entry name" value="Phosphoglucomutase, C-terminal domain"/>
    <property type="match status" value="1"/>
</dbReference>
<dbReference type="SUPFAM" id="SSF53738">
    <property type="entry name" value="Phosphoglucomutase, first 3 domains"/>
    <property type="match status" value="3"/>
</dbReference>
<dbReference type="PROSITE" id="PS00710">
    <property type="entry name" value="PGM_PMM"/>
    <property type="match status" value="1"/>
</dbReference>
<accession>B7ICC7</accession>